<evidence type="ECO:0000256" key="1">
    <source>
        <dbReference type="SAM" id="MobiDB-lite"/>
    </source>
</evidence>
<evidence type="ECO:0000269" key="2">
    <source>
    </source>
</evidence>
<evidence type="ECO:0000305" key="3"/>
<keyword id="KW-0963">Cytoplasm</keyword>
<keyword id="KW-0417">Keratinization</keyword>
<keyword id="KW-1267">Proteomics identification</keyword>
<keyword id="KW-1185">Reference proteome</keyword>
<keyword id="KW-0677">Repeat</keyword>
<organism>
    <name type="scientific">Homo sapiens</name>
    <name type="common">Human</name>
    <dbReference type="NCBI Taxonomy" id="9606"/>
    <lineage>
        <taxon>Eukaryota</taxon>
        <taxon>Metazoa</taxon>
        <taxon>Chordata</taxon>
        <taxon>Craniata</taxon>
        <taxon>Vertebrata</taxon>
        <taxon>Euteleostomi</taxon>
        <taxon>Mammalia</taxon>
        <taxon>Eutheria</taxon>
        <taxon>Euarchontoglires</taxon>
        <taxon>Primates</taxon>
        <taxon>Haplorrhini</taxon>
        <taxon>Catarrhini</taxon>
        <taxon>Hominidae</taxon>
        <taxon>Homo</taxon>
    </lineage>
</organism>
<name>SPR2D_HUMAN</name>
<reference key="1">
    <citation type="journal article" date="1988" name="Mol. Cell. Biol.">
        <title>Isolation, characterization, and UV-stimulated expression of two families of genes encoding polypeptides of related structure in human epidermal keratinocytes.</title>
        <authorList>
            <person name="Kartasova T."/>
            <person name="van de Putte P."/>
        </authorList>
    </citation>
    <scope>NUCLEOTIDE SEQUENCE [MRNA]</scope>
    <source>
        <tissue>Keratinocyte</tissue>
    </source>
</reference>
<reference key="2">
    <citation type="journal article" date="2001" name="J. Biol. Chem.">
        <title>Structural organization and regulation of the small proline-rich family of cornified envelope precursors suggest a role in adaptive barrier function.</title>
        <authorList>
            <person name="Cabral A."/>
            <person name="Voskamp P."/>
            <person name="Cleton-Jansen A.-M."/>
            <person name="South A."/>
            <person name="Nizetic D."/>
            <person name="Backendorf C."/>
        </authorList>
    </citation>
    <scope>NUCLEOTIDE SEQUENCE [GENOMIC DNA]</scope>
</reference>
<reference key="3">
    <citation type="journal article" date="2004" name="Nat. Genet.">
        <title>Complete sequencing and characterization of 21,243 full-length human cDNAs.</title>
        <authorList>
            <person name="Ota T."/>
            <person name="Suzuki Y."/>
            <person name="Nishikawa T."/>
            <person name="Otsuki T."/>
            <person name="Sugiyama T."/>
            <person name="Irie R."/>
            <person name="Wakamatsu A."/>
            <person name="Hayashi K."/>
            <person name="Sato H."/>
            <person name="Nagai K."/>
            <person name="Kimura K."/>
            <person name="Makita H."/>
            <person name="Sekine M."/>
            <person name="Obayashi M."/>
            <person name="Nishi T."/>
            <person name="Shibahara T."/>
            <person name="Tanaka T."/>
            <person name="Ishii S."/>
            <person name="Yamamoto J."/>
            <person name="Saito K."/>
            <person name="Kawai Y."/>
            <person name="Isono Y."/>
            <person name="Nakamura Y."/>
            <person name="Nagahari K."/>
            <person name="Murakami K."/>
            <person name="Yasuda T."/>
            <person name="Iwayanagi T."/>
            <person name="Wagatsuma M."/>
            <person name="Shiratori A."/>
            <person name="Sudo H."/>
            <person name="Hosoiri T."/>
            <person name="Kaku Y."/>
            <person name="Kodaira H."/>
            <person name="Kondo H."/>
            <person name="Sugawara M."/>
            <person name="Takahashi M."/>
            <person name="Kanda K."/>
            <person name="Yokoi T."/>
            <person name="Furuya T."/>
            <person name="Kikkawa E."/>
            <person name="Omura Y."/>
            <person name="Abe K."/>
            <person name="Kamihara K."/>
            <person name="Katsuta N."/>
            <person name="Sato K."/>
            <person name="Tanikawa M."/>
            <person name="Yamazaki M."/>
            <person name="Ninomiya K."/>
            <person name="Ishibashi T."/>
            <person name="Yamashita H."/>
            <person name="Murakawa K."/>
            <person name="Fujimori K."/>
            <person name="Tanai H."/>
            <person name="Kimata M."/>
            <person name="Watanabe M."/>
            <person name="Hiraoka S."/>
            <person name="Chiba Y."/>
            <person name="Ishida S."/>
            <person name="Ono Y."/>
            <person name="Takiguchi S."/>
            <person name="Watanabe S."/>
            <person name="Yosida M."/>
            <person name="Hotuta T."/>
            <person name="Kusano J."/>
            <person name="Kanehori K."/>
            <person name="Takahashi-Fujii A."/>
            <person name="Hara H."/>
            <person name="Tanase T.-O."/>
            <person name="Nomura Y."/>
            <person name="Togiya S."/>
            <person name="Komai F."/>
            <person name="Hara R."/>
            <person name="Takeuchi K."/>
            <person name="Arita M."/>
            <person name="Imose N."/>
            <person name="Musashino K."/>
            <person name="Yuuki H."/>
            <person name="Oshima A."/>
            <person name="Sasaki N."/>
            <person name="Aotsuka S."/>
            <person name="Yoshikawa Y."/>
            <person name="Matsunawa H."/>
            <person name="Ichihara T."/>
            <person name="Shiohata N."/>
            <person name="Sano S."/>
            <person name="Moriya S."/>
            <person name="Momiyama H."/>
            <person name="Satoh N."/>
            <person name="Takami S."/>
            <person name="Terashima Y."/>
            <person name="Suzuki O."/>
            <person name="Nakagawa S."/>
            <person name="Senoh A."/>
            <person name="Mizoguchi H."/>
            <person name="Goto Y."/>
            <person name="Shimizu F."/>
            <person name="Wakebe H."/>
            <person name="Hishigaki H."/>
            <person name="Watanabe T."/>
            <person name="Sugiyama A."/>
            <person name="Takemoto M."/>
            <person name="Kawakami B."/>
            <person name="Yamazaki M."/>
            <person name="Watanabe K."/>
            <person name="Kumagai A."/>
            <person name="Itakura S."/>
            <person name="Fukuzumi Y."/>
            <person name="Fujimori Y."/>
            <person name="Komiyama M."/>
            <person name="Tashiro H."/>
            <person name="Tanigami A."/>
            <person name="Fujiwara T."/>
            <person name="Ono T."/>
            <person name="Yamada K."/>
            <person name="Fujii Y."/>
            <person name="Ozaki K."/>
            <person name="Hirao M."/>
            <person name="Ohmori Y."/>
            <person name="Kawabata A."/>
            <person name="Hikiji T."/>
            <person name="Kobatake N."/>
            <person name="Inagaki H."/>
            <person name="Ikema Y."/>
            <person name="Okamoto S."/>
            <person name="Okitani R."/>
            <person name="Kawakami T."/>
            <person name="Noguchi S."/>
            <person name="Itoh T."/>
            <person name="Shigeta K."/>
            <person name="Senba T."/>
            <person name="Matsumura K."/>
            <person name="Nakajima Y."/>
            <person name="Mizuno T."/>
            <person name="Morinaga M."/>
            <person name="Sasaki M."/>
            <person name="Togashi T."/>
            <person name="Oyama M."/>
            <person name="Hata H."/>
            <person name="Watanabe M."/>
            <person name="Komatsu T."/>
            <person name="Mizushima-Sugano J."/>
            <person name="Satoh T."/>
            <person name="Shirai Y."/>
            <person name="Takahashi Y."/>
            <person name="Nakagawa K."/>
            <person name="Okumura K."/>
            <person name="Nagase T."/>
            <person name="Nomura N."/>
            <person name="Kikuchi H."/>
            <person name="Masuho Y."/>
            <person name="Yamashita R."/>
            <person name="Nakai K."/>
            <person name="Yada T."/>
            <person name="Nakamura Y."/>
            <person name="Ohara O."/>
            <person name="Isogai T."/>
            <person name="Sugano S."/>
        </authorList>
    </citation>
    <scope>NUCLEOTIDE SEQUENCE [LARGE SCALE MRNA]</scope>
    <scope>VARIANT ALA-20</scope>
    <source>
        <tissue>Tongue</tissue>
    </source>
</reference>
<reference key="4">
    <citation type="journal article" date="2006" name="Nature">
        <title>The DNA sequence and biological annotation of human chromosome 1.</title>
        <authorList>
            <person name="Gregory S.G."/>
            <person name="Barlow K.F."/>
            <person name="McLay K.E."/>
            <person name="Kaul R."/>
            <person name="Swarbreck D."/>
            <person name="Dunham A."/>
            <person name="Scott C.E."/>
            <person name="Howe K.L."/>
            <person name="Woodfine K."/>
            <person name="Spencer C.C.A."/>
            <person name="Jones M.C."/>
            <person name="Gillson C."/>
            <person name="Searle S."/>
            <person name="Zhou Y."/>
            <person name="Kokocinski F."/>
            <person name="McDonald L."/>
            <person name="Evans R."/>
            <person name="Phillips K."/>
            <person name="Atkinson A."/>
            <person name="Cooper R."/>
            <person name="Jones C."/>
            <person name="Hall R.E."/>
            <person name="Andrews T.D."/>
            <person name="Lloyd C."/>
            <person name="Ainscough R."/>
            <person name="Almeida J.P."/>
            <person name="Ambrose K.D."/>
            <person name="Anderson F."/>
            <person name="Andrew R.W."/>
            <person name="Ashwell R.I.S."/>
            <person name="Aubin K."/>
            <person name="Babbage A.K."/>
            <person name="Bagguley C.L."/>
            <person name="Bailey J."/>
            <person name="Beasley H."/>
            <person name="Bethel G."/>
            <person name="Bird C.P."/>
            <person name="Bray-Allen S."/>
            <person name="Brown J.Y."/>
            <person name="Brown A.J."/>
            <person name="Buckley D."/>
            <person name="Burton J."/>
            <person name="Bye J."/>
            <person name="Carder C."/>
            <person name="Chapman J.C."/>
            <person name="Clark S.Y."/>
            <person name="Clarke G."/>
            <person name="Clee C."/>
            <person name="Cobley V."/>
            <person name="Collier R.E."/>
            <person name="Corby N."/>
            <person name="Coville G.J."/>
            <person name="Davies J."/>
            <person name="Deadman R."/>
            <person name="Dunn M."/>
            <person name="Earthrowl M."/>
            <person name="Ellington A.G."/>
            <person name="Errington H."/>
            <person name="Frankish A."/>
            <person name="Frankland J."/>
            <person name="French L."/>
            <person name="Garner P."/>
            <person name="Garnett J."/>
            <person name="Gay L."/>
            <person name="Ghori M.R.J."/>
            <person name="Gibson R."/>
            <person name="Gilby L.M."/>
            <person name="Gillett W."/>
            <person name="Glithero R.J."/>
            <person name="Grafham D.V."/>
            <person name="Griffiths C."/>
            <person name="Griffiths-Jones S."/>
            <person name="Grocock R."/>
            <person name="Hammond S."/>
            <person name="Harrison E.S.I."/>
            <person name="Hart E."/>
            <person name="Haugen E."/>
            <person name="Heath P.D."/>
            <person name="Holmes S."/>
            <person name="Holt K."/>
            <person name="Howden P.J."/>
            <person name="Hunt A.R."/>
            <person name="Hunt S.E."/>
            <person name="Hunter G."/>
            <person name="Isherwood J."/>
            <person name="James R."/>
            <person name="Johnson C."/>
            <person name="Johnson D."/>
            <person name="Joy A."/>
            <person name="Kay M."/>
            <person name="Kershaw J.K."/>
            <person name="Kibukawa M."/>
            <person name="Kimberley A.M."/>
            <person name="King A."/>
            <person name="Knights A.J."/>
            <person name="Lad H."/>
            <person name="Laird G."/>
            <person name="Lawlor S."/>
            <person name="Leongamornlert D.A."/>
            <person name="Lloyd D.M."/>
            <person name="Loveland J."/>
            <person name="Lovell J."/>
            <person name="Lush M.J."/>
            <person name="Lyne R."/>
            <person name="Martin S."/>
            <person name="Mashreghi-Mohammadi M."/>
            <person name="Matthews L."/>
            <person name="Matthews N.S.W."/>
            <person name="McLaren S."/>
            <person name="Milne S."/>
            <person name="Mistry S."/>
            <person name="Moore M.J.F."/>
            <person name="Nickerson T."/>
            <person name="O'Dell C.N."/>
            <person name="Oliver K."/>
            <person name="Palmeiri A."/>
            <person name="Palmer S.A."/>
            <person name="Parker A."/>
            <person name="Patel D."/>
            <person name="Pearce A.V."/>
            <person name="Peck A.I."/>
            <person name="Pelan S."/>
            <person name="Phelps K."/>
            <person name="Phillimore B.J."/>
            <person name="Plumb R."/>
            <person name="Rajan J."/>
            <person name="Raymond C."/>
            <person name="Rouse G."/>
            <person name="Saenphimmachak C."/>
            <person name="Sehra H.K."/>
            <person name="Sheridan E."/>
            <person name="Shownkeen R."/>
            <person name="Sims S."/>
            <person name="Skuce C.D."/>
            <person name="Smith M."/>
            <person name="Steward C."/>
            <person name="Subramanian S."/>
            <person name="Sycamore N."/>
            <person name="Tracey A."/>
            <person name="Tromans A."/>
            <person name="Van Helmond Z."/>
            <person name="Wall M."/>
            <person name="Wallis J.M."/>
            <person name="White S."/>
            <person name="Whitehead S.L."/>
            <person name="Wilkinson J.E."/>
            <person name="Willey D.L."/>
            <person name="Williams H."/>
            <person name="Wilming L."/>
            <person name="Wray P.W."/>
            <person name="Wu Z."/>
            <person name="Coulson A."/>
            <person name="Vaudin M."/>
            <person name="Sulston J.E."/>
            <person name="Durbin R.M."/>
            <person name="Hubbard T."/>
            <person name="Wooster R."/>
            <person name="Dunham I."/>
            <person name="Carter N.P."/>
            <person name="McVean G."/>
            <person name="Ross M.T."/>
            <person name="Harrow J."/>
            <person name="Olson M.V."/>
            <person name="Beck S."/>
            <person name="Rogers J."/>
            <person name="Bentley D.R."/>
        </authorList>
    </citation>
    <scope>NUCLEOTIDE SEQUENCE [LARGE SCALE GENOMIC DNA]</scope>
</reference>
<reference key="5">
    <citation type="submission" date="2005-09" db="EMBL/GenBank/DDBJ databases">
        <authorList>
            <person name="Mural R.J."/>
            <person name="Istrail S."/>
            <person name="Sutton G.G."/>
            <person name="Florea L."/>
            <person name="Halpern A.L."/>
            <person name="Mobarry C.M."/>
            <person name="Lippert R."/>
            <person name="Walenz B."/>
            <person name="Shatkay H."/>
            <person name="Dew I."/>
            <person name="Miller J.R."/>
            <person name="Flanigan M.J."/>
            <person name="Edwards N.J."/>
            <person name="Bolanos R."/>
            <person name="Fasulo D."/>
            <person name="Halldorsson B.V."/>
            <person name="Hannenhalli S."/>
            <person name="Turner R."/>
            <person name="Yooseph S."/>
            <person name="Lu F."/>
            <person name="Nusskern D.R."/>
            <person name="Shue B.C."/>
            <person name="Zheng X.H."/>
            <person name="Zhong F."/>
            <person name="Delcher A.L."/>
            <person name="Huson D.H."/>
            <person name="Kravitz S.A."/>
            <person name="Mouchard L."/>
            <person name="Reinert K."/>
            <person name="Remington K.A."/>
            <person name="Clark A.G."/>
            <person name="Waterman M.S."/>
            <person name="Eichler E.E."/>
            <person name="Adams M.D."/>
            <person name="Hunkapiller M.W."/>
            <person name="Myers E.W."/>
            <person name="Venter J.C."/>
        </authorList>
    </citation>
    <scope>NUCLEOTIDE SEQUENCE [LARGE SCALE GENOMIC DNA]</scope>
</reference>
<reference key="6">
    <citation type="journal article" date="2004" name="Genome Res.">
        <title>The status, quality, and expansion of the NIH full-length cDNA project: the Mammalian Gene Collection (MGC).</title>
        <authorList>
            <consortium name="The MGC Project Team"/>
        </authorList>
    </citation>
    <scope>NUCLEOTIDE SEQUENCE [LARGE SCALE MRNA]</scope>
</reference>
<protein>
    <recommendedName>
        <fullName>Small proline-rich protein 2D</fullName>
        <shortName>SPR-2D</shortName>
    </recommendedName>
    <alternativeName>
        <fullName>Small proline-rich protein II</fullName>
        <shortName>SPR-II</shortName>
    </alternativeName>
</protein>
<proteinExistence type="evidence at protein level"/>
<accession>P22532</accession>
<accession>A4QN03</accession>
<accession>A8K5K2</accession>
<accession>D3DV33</accession>
<accession>Q5T523</accession>
<accession>Q96RM3</accession>
<comment type="function">
    <text>Cross-linked envelope protein of keratinocytes. It is a keratinocyte protein that first appears in the cell cytosol, but ultimately becomes cross-linked to membrane proteins by transglutaminase. All that results in the formation of an insoluble envelope beneath the plasma membrane.</text>
</comment>
<comment type="subcellular location">
    <subcellularLocation>
        <location>Cytoplasm</location>
    </subcellularLocation>
</comment>
<comment type="induction">
    <text>During squamous differentiation of epidermal keratinocytes.</text>
</comment>
<comment type="similarity">
    <text evidence="3">Belongs to the cornifin (SPRR) family.</text>
</comment>
<feature type="chain" id="PRO_0000150010" description="Small proline-rich protein 2D">
    <location>
        <begin position="1"/>
        <end position="72"/>
    </location>
</feature>
<feature type="repeat" description="1">
    <location>
        <begin position="21"/>
        <end position="29"/>
    </location>
</feature>
<feature type="repeat" description="2">
    <location>
        <begin position="30"/>
        <end position="38"/>
    </location>
</feature>
<feature type="repeat" description="3">
    <location>
        <begin position="39"/>
        <end position="47"/>
    </location>
</feature>
<feature type="region of interest" description="Disordered" evidence="1">
    <location>
        <begin position="1"/>
        <end position="20"/>
    </location>
</feature>
<feature type="region of interest" description="3 X 9 AA tandem repeats of P-K-C-P-[EQ]-P-C-P-[PS]">
    <location>
        <begin position="21"/>
        <end position="47"/>
    </location>
</feature>
<feature type="region of interest" description="Disordered" evidence="1">
    <location>
        <begin position="33"/>
        <end position="72"/>
    </location>
</feature>
<feature type="compositionally biased region" description="Low complexity" evidence="1">
    <location>
        <begin position="1"/>
        <end position="11"/>
    </location>
</feature>
<feature type="compositionally biased region" description="Pro residues" evidence="1">
    <location>
        <begin position="33"/>
        <end position="47"/>
    </location>
</feature>
<feature type="compositionally biased region" description="Pro residues" evidence="1">
    <location>
        <begin position="56"/>
        <end position="72"/>
    </location>
</feature>
<feature type="sequence variant" id="VAR_053049" description="In dbSNP:rs1846857." evidence="2">
    <original>T</original>
    <variation>A</variation>
    <location>
        <position position="20"/>
    </location>
</feature>
<feature type="sequence conflict" description="In Ref. 1; AAA36640." evidence="3" ref="1">
    <original>K</original>
    <variation>N</variation>
    <location>
        <position position="22"/>
    </location>
</feature>
<feature type="sequence conflict" description="In Ref. 1; AAA36640." evidence="3" ref="1">
    <original>C</original>
    <variation>S</variation>
    <location>
        <position position="32"/>
    </location>
</feature>
<feature type="sequence conflict" description="In Ref. 1; AAA36640." evidence="3" ref="1">
    <original>SP</original>
    <variation>PS</variation>
    <location>
        <begin position="38"/>
        <end position="39"/>
    </location>
</feature>
<dbReference type="EMBL" id="M21302">
    <property type="protein sequence ID" value="AAA36640.1"/>
    <property type="molecule type" value="mRNA"/>
</dbReference>
<dbReference type="EMBL" id="AF333954">
    <property type="protein sequence ID" value="AAK70941.1"/>
    <property type="molecule type" value="Genomic_DNA"/>
</dbReference>
<dbReference type="EMBL" id="AK291317">
    <property type="protein sequence ID" value="BAF84006.1"/>
    <property type="molecule type" value="mRNA"/>
</dbReference>
<dbReference type="EMBL" id="AL356867">
    <property type="status" value="NOT_ANNOTATED_CDS"/>
    <property type="molecule type" value="Genomic_DNA"/>
</dbReference>
<dbReference type="EMBL" id="CH471121">
    <property type="protein sequence ID" value="EAW53348.1"/>
    <property type="molecule type" value="Genomic_DNA"/>
</dbReference>
<dbReference type="EMBL" id="CH471121">
    <property type="protein sequence ID" value="EAW53349.1"/>
    <property type="molecule type" value="Genomic_DNA"/>
</dbReference>
<dbReference type="EMBL" id="CH471121">
    <property type="protein sequence ID" value="EAW53350.1"/>
    <property type="molecule type" value="Genomic_DNA"/>
</dbReference>
<dbReference type="EMBL" id="BC120938">
    <property type="protein sequence ID" value="AAI20939.1"/>
    <property type="molecule type" value="mRNA"/>
</dbReference>
<dbReference type="CCDS" id="CCDS30864.1"/>
<dbReference type="RefSeq" id="NP_001369177.1">
    <property type="nucleotide sequence ID" value="NM_001382248.1"/>
</dbReference>
<dbReference type="RefSeq" id="NP_008876.3">
    <property type="nucleotide sequence ID" value="NM_006945.4"/>
</dbReference>
<dbReference type="RefSeq" id="XP_016857664.1">
    <property type="nucleotide sequence ID" value="XM_017002175.1"/>
</dbReference>
<dbReference type="BioGRID" id="112581">
    <property type="interactions" value="33"/>
</dbReference>
<dbReference type="FunCoup" id="P22532">
    <property type="interactions" value="57"/>
</dbReference>
<dbReference type="IntAct" id="P22532">
    <property type="interactions" value="12"/>
</dbReference>
<dbReference type="MINT" id="P22532"/>
<dbReference type="STRING" id="9606.ENSP00000357746"/>
<dbReference type="GlyGen" id="P22532">
    <property type="glycosylation" value="2 sites"/>
</dbReference>
<dbReference type="iPTMnet" id="P22532"/>
<dbReference type="PhosphoSitePlus" id="P22532"/>
<dbReference type="BioMuta" id="SPRR2D"/>
<dbReference type="jPOST" id="P22532"/>
<dbReference type="MassIVE" id="P22532"/>
<dbReference type="PaxDb" id="9606-ENSP00000357746"/>
<dbReference type="PeptideAtlas" id="P22532"/>
<dbReference type="ProteomicsDB" id="53999"/>
<dbReference type="Pumba" id="P22532"/>
<dbReference type="Antibodypedia" id="71322">
    <property type="antibodies" value="7 antibodies from 7 providers"/>
</dbReference>
<dbReference type="DNASU" id="6703"/>
<dbReference type="Ensembl" id="ENST00000360379.4">
    <property type="protein sequence ID" value="ENSP00000353542.3"/>
    <property type="gene ID" value="ENSG00000163216.7"/>
</dbReference>
<dbReference type="Ensembl" id="ENST00000368756.1">
    <property type="protein sequence ID" value="ENSP00000357745.1"/>
    <property type="gene ID" value="ENSG00000163216.7"/>
</dbReference>
<dbReference type="Ensembl" id="ENST00000368757.1">
    <property type="protein sequence ID" value="ENSP00000357746.1"/>
    <property type="gene ID" value="ENSG00000163216.7"/>
</dbReference>
<dbReference type="Ensembl" id="ENST00000368758.3">
    <property type="protein sequence ID" value="ENSP00000357747.3"/>
    <property type="gene ID" value="ENSG00000163216.7"/>
</dbReference>
<dbReference type="GeneID" id="6703"/>
<dbReference type="KEGG" id="hsa:6703"/>
<dbReference type="MANE-Select" id="ENST00000360379.4">
    <property type="protein sequence ID" value="ENSP00000353542.3"/>
    <property type="RefSeq nucleotide sequence ID" value="NM_006945.5"/>
    <property type="RefSeq protein sequence ID" value="NP_008876.3"/>
</dbReference>
<dbReference type="UCSC" id="uc001fbb.2">
    <property type="organism name" value="human"/>
</dbReference>
<dbReference type="AGR" id="HGNC:11264"/>
<dbReference type="CTD" id="6703"/>
<dbReference type="DisGeNET" id="6703"/>
<dbReference type="GeneCards" id="SPRR2D"/>
<dbReference type="HGNC" id="HGNC:11264">
    <property type="gene designation" value="SPRR2D"/>
</dbReference>
<dbReference type="HPA" id="ENSG00000163216">
    <property type="expression patterns" value="Tissue enriched (esophagus)"/>
</dbReference>
<dbReference type="MIM" id="617587">
    <property type="type" value="gene"/>
</dbReference>
<dbReference type="neXtProt" id="NX_P22532"/>
<dbReference type="OpenTargets" id="ENSG00000163216"/>
<dbReference type="PharmGKB" id="PA36093"/>
<dbReference type="VEuPathDB" id="HostDB:ENSG00000163216"/>
<dbReference type="eggNOG" id="ENOG502TM5C">
    <property type="taxonomic scope" value="Eukaryota"/>
</dbReference>
<dbReference type="GeneTree" id="ENSGT00940000163622"/>
<dbReference type="HOGENOM" id="CLU_192372_0_0_1"/>
<dbReference type="InParanoid" id="P22532"/>
<dbReference type="OMA" id="CYEPCIA"/>
<dbReference type="PAN-GO" id="P22532">
    <property type="GO annotations" value="0 GO annotations based on evolutionary models"/>
</dbReference>
<dbReference type="PathwayCommons" id="P22532"/>
<dbReference type="Reactome" id="R-HSA-6809371">
    <property type="pathway name" value="Formation of the cornified envelope"/>
</dbReference>
<dbReference type="SignaLink" id="P22532"/>
<dbReference type="BioGRID-ORCS" id="6703">
    <property type="hits" value="15 hits in 680 CRISPR screens"/>
</dbReference>
<dbReference type="GenomeRNAi" id="6703"/>
<dbReference type="Pharos" id="P22532">
    <property type="development level" value="Tdark"/>
</dbReference>
<dbReference type="PRO" id="PR:P22532"/>
<dbReference type="Proteomes" id="UP000005640">
    <property type="component" value="Chromosome 1"/>
</dbReference>
<dbReference type="RNAct" id="P22532">
    <property type="molecule type" value="protein"/>
</dbReference>
<dbReference type="Bgee" id="ENSG00000163216">
    <property type="expression patterns" value="Expressed in lower esophagus mucosa and 91 other cell types or tissues"/>
</dbReference>
<dbReference type="GO" id="GO:0001533">
    <property type="term" value="C:cornified envelope"/>
    <property type="evidence" value="ECO:0000304"/>
    <property type="project" value="Reactome"/>
</dbReference>
<dbReference type="GO" id="GO:0005737">
    <property type="term" value="C:cytoplasm"/>
    <property type="evidence" value="ECO:0000314"/>
    <property type="project" value="UniProtKB"/>
</dbReference>
<dbReference type="GO" id="GO:0005829">
    <property type="term" value="C:cytosol"/>
    <property type="evidence" value="ECO:0000304"/>
    <property type="project" value="Reactome"/>
</dbReference>
<dbReference type="GO" id="GO:0008544">
    <property type="term" value="P:epidermis development"/>
    <property type="evidence" value="ECO:0000303"/>
    <property type="project" value="UniProtKB"/>
</dbReference>
<dbReference type="GO" id="GO:0031424">
    <property type="term" value="P:keratinization"/>
    <property type="evidence" value="ECO:0007669"/>
    <property type="project" value="UniProtKB-KW"/>
</dbReference>
<dbReference type="InterPro" id="IPR029142">
    <property type="entry name" value="SPRR2"/>
</dbReference>
<dbReference type="Pfam" id="PF14820">
    <property type="entry name" value="SPRR2"/>
    <property type="match status" value="1"/>
</dbReference>
<dbReference type="PRINTS" id="PR00021">
    <property type="entry name" value="PRORICH"/>
</dbReference>
<sequence>MSYQQQQCKQPCQPPPVCPTPKCPEPCPPPKCPEPCPSPKCPQPCPPQQCQQKYPPVTPSPPCQPKCPPKSK</sequence>
<gene>
    <name type="primary">SPRR2D</name>
</gene>